<proteinExistence type="inferred from homology"/>
<protein>
    <recommendedName>
        <fullName evidence="1">Integration host factor subunit alpha</fullName>
        <shortName evidence="1">IHF-alpha</shortName>
    </recommendedName>
</protein>
<dbReference type="EMBL" id="CP000390">
    <property type="protein sequence ID" value="ABG62543.1"/>
    <property type="molecule type" value="Genomic_DNA"/>
</dbReference>
<dbReference type="SMR" id="Q11J82"/>
<dbReference type="STRING" id="266779.Meso_1147"/>
<dbReference type="KEGG" id="mes:Meso_1147"/>
<dbReference type="eggNOG" id="COG0776">
    <property type="taxonomic scope" value="Bacteria"/>
</dbReference>
<dbReference type="HOGENOM" id="CLU_105066_1_1_5"/>
<dbReference type="OrthoDB" id="9797747at2"/>
<dbReference type="GO" id="GO:0005829">
    <property type="term" value="C:cytosol"/>
    <property type="evidence" value="ECO:0007669"/>
    <property type="project" value="TreeGrafter"/>
</dbReference>
<dbReference type="GO" id="GO:0003677">
    <property type="term" value="F:DNA binding"/>
    <property type="evidence" value="ECO:0007669"/>
    <property type="project" value="UniProtKB-UniRule"/>
</dbReference>
<dbReference type="GO" id="GO:0030527">
    <property type="term" value="F:structural constituent of chromatin"/>
    <property type="evidence" value="ECO:0007669"/>
    <property type="project" value="InterPro"/>
</dbReference>
<dbReference type="GO" id="GO:0006310">
    <property type="term" value="P:DNA recombination"/>
    <property type="evidence" value="ECO:0007669"/>
    <property type="project" value="UniProtKB-UniRule"/>
</dbReference>
<dbReference type="GO" id="GO:0009893">
    <property type="term" value="P:positive regulation of metabolic process"/>
    <property type="evidence" value="ECO:0007669"/>
    <property type="project" value="UniProtKB-ARBA"/>
</dbReference>
<dbReference type="GO" id="GO:0006355">
    <property type="term" value="P:regulation of DNA-templated transcription"/>
    <property type="evidence" value="ECO:0007669"/>
    <property type="project" value="UniProtKB-UniRule"/>
</dbReference>
<dbReference type="GO" id="GO:0006417">
    <property type="term" value="P:regulation of translation"/>
    <property type="evidence" value="ECO:0007669"/>
    <property type="project" value="UniProtKB-UniRule"/>
</dbReference>
<dbReference type="CDD" id="cd13835">
    <property type="entry name" value="IHF_A"/>
    <property type="match status" value="1"/>
</dbReference>
<dbReference type="Gene3D" id="4.10.520.10">
    <property type="entry name" value="IHF-like DNA-binding proteins"/>
    <property type="match status" value="1"/>
</dbReference>
<dbReference type="HAMAP" id="MF_00380">
    <property type="entry name" value="IHF_alpha"/>
    <property type="match status" value="1"/>
</dbReference>
<dbReference type="InterPro" id="IPR000119">
    <property type="entry name" value="Hist_DNA-bd"/>
</dbReference>
<dbReference type="InterPro" id="IPR020816">
    <property type="entry name" value="Histone-like_DNA-bd_CS"/>
</dbReference>
<dbReference type="InterPro" id="IPR010992">
    <property type="entry name" value="IHF-like_DNA-bd_dom_sf"/>
</dbReference>
<dbReference type="InterPro" id="IPR005684">
    <property type="entry name" value="IHF_alpha"/>
</dbReference>
<dbReference type="NCBIfam" id="TIGR00987">
    <property type="entry name" value="himA"/>
    <property type="match status" value="1"/>
</dbReference>
<dbReference type="NCBIfam" id="NF001401">
    <property type="entry name" value="PRK00285.1"/>
    <property type="match status" value="1"/>
</dbReference>
<dbReference type="PANTHER" id="PTHR33175">
    <property type="entry name" value="DNA-BINDING PROTEIN HU"/>
    <property type="match status" value="1"/>
</dbReference>
<dbReference type="PANTHER" id="PTHR33175:SF2">
    <property type="entry name" value="INTEGRATION HOST FACTOR SUBUNIT ALPHA"/>
    <property type="match status" value="1"/>
</dbReference>
<dbReference type="Pfam" id="PF00216">
    <property type="entry name" value="Bac_DNA_binding"/>
    <property type="match status" value="1"/>
</dbReference>
<dbReference type="PRINTS" id="PR01727">
    <property type="entry name" value="DNABINDINGHU"/>
</dbReference>
<dbReference type="SMART" id="SM00411">
    <property type="entry name" value="BHL"/>
    <property type="match status" value="1"/>
</dbReference>
<dbReference type="SUPFAM" id="SSF47729">
    <property type="entry name" value="IHF-like DNA-binding proteins"/>
    <property type="match status" value="1"/>
</dbReference>
<dbReference type="PROSITE" id="PS00045">
    <property type="entry name" value="HISTONE_LIKE"/>
    <property type="match status" value="1"/>
</dbReference>
<sequence>MGGKTVTRADLAEAVYRKVGLSRTESAQIVEMVLQEVCDAIVRGETVKLSSFATFQVREKNERVGRNPKTGEEVPISPRRVMTFKASNVLKSRILRAHQTRKPSKEATASS</sequence>
<name>IHFA_CHESB</name>
<keyword id="KW-0233">DNA recombination</keyword>
<keyword id="KW-0238">DNA-binding</keyword>
<keyword id="KW-0804">Transcription</keyword>
<keyword id="KW-0805">Transcription regulation</keyword>
<keyword id="KW-0810">Translation regulation</keyword>
<gene>
    <name evidence="1" type="primary">ihfA</name>
    <name evidence="1" type="synonym">himA</name>
    <name type="ordered locus">Meso_1147</name>
</gene>
<feature type="chain" id="PRO_0000277743" description="Integration host factor subunit alpha">
    <location>
        <begin position="1"/>
        <end position="111"/>
    </location>
</feature>
<accession>Q11J82</accession>
<evidence type="ECO:0000255" key="1">
    <source>
        <dbReference type="HAMAP-Rule" id="MF_00380"/>
    </source>
</evidence>
<reference key="1">
    <citation type="submission" date="2006-06" db="EMBL/GenBank/DDBJ databases">
        <title>Complete sequence of chromosome of Mesorhizobium sp. BNC1.</title>
        <authorList>
            <consortium name="US DOE Joint Genome Institute"/>
            <person name="Copeland A."/>
            <person name="Lucas S."/>
            <person name="Lapidus A."/>
            <person name="Barry K."/>
            <person name="Detter J.C."/>
            <person name="Glavina del Rio T."/>
            <person name="Hammon N."/>
            <person name="Israni S."/>
            <person name="Dalin E."/>
            <person name="Tice H."/>
            <person name="Pitluck S."/>
            <person name="Chertkov O."/>
            <person name="Brettin T."/>
            <person name="Bruce D."/>
            <person name="Han C."/>
            <person name="Tapia R."/>
            <person name="Gilna P."/>
            <person name="Schmutz J."/>
            <person name="Larimer F."/>
            <person name="Land M."/>
            <person name="Hauser L."/>
            <person name="Kyrpides N."/>
            <person name="Mikhailova N."/>
            <person name="Richardson P."/>
        </authorList>
    </citation>
    <scope>NUCLEOTIDE SEQUENCE [LARGE SCALE GENOMIC DNA]</scope>
    <source>
        <strain>BNC1</strain>
    </source>
</reference>
<comment type="function">
    <text evidence="1">This protein is one of the two subunits of integration host factor, a specific DNA-binding protein that functions in genetic recombination as well as in transcriptional and translational control.</text>
</comment>
<comment type="subunit">
    <text evidence="1">Heterodimer of an alpha and a beta chain.</text>
</comment>
<comment type="similarity">
    <text evidence="1">Belongs to the bacterial histone-like protein family.</text>
</comment>
<organism>
    <name type="scientific">Chelativorans sp. (strain BNC1)</name>
    <dbReference type="NCBI Taxonomy" id="266779"/>
    <lineage>
        <taxon>Bacteria</taxon>
        <taxon>Pseudomonadati</taxon>
        <taxon>Pseudomonadota</taxon>
        <taxon>Alphaproteobacteria</taxon>
        <taxon>Hyphomicrobiales</taxon>
        <taxon>Phyllobacteriaceae</taxon>
        <taxon>Chelativorans</taxon>
    </lineage>
</organism>